<sequence length="25" mass="3456">MRAKWRKKRMRRLKRKRRKMRQRSK</sequence>
<reference key="1">
    <citation type="submission" date="1997-04" db="EMBL/GenBank/DDBJ databases">
        <authorList>
            <person name="Rocha D."/>
            <person name="Anderson E."/>
            <person name="Botcherby M."/>
            <person name="Jordan B."/>
        </authorList>
    </citation>
    <scope>NUCLEOTIDE SEQUENCE [MRNA]</scope>
    <source>
        <strain>C57BL/6J</strain>
    </source>
</reference>
<reference key="2">
    <citation type="journal article" date="2005" name="Science">
        <title>The transcriptional landscape of the mammalian genome.</title>
        <authorList>
            <person name="Carninci P."/>
            <person name="Kasukawa T."/>
            <person name="Katayama S."/>
            <person name="Gough J."/>
            <person name="Frith M.C."/>
            <person name="Maeda N."/>
            <person name="Oyama R."/>
            <person name="Ravasi T."/>
            <person name="Lenhard B."/>
            <person name="Wells C."/>
            <person name="Kodzius R."/>
            <person name="Shimokawa K."/>
            <person name="Bajic V.B."/>
            <person name="Brenner S.E."/>
            <person name="Batalov S."/>
            <person name="Forrest A.R."/>
            <person name="Zavolan M."/>
            <person name="Davis M.J."/>
            <person name="Wilming L.G."/>
            <person name="Aidinis V."/>
            <person name="Allen J.E."/>
            <person name="Ambesi-Impiombato A."/>
            <person name="Apweiler R."/>
            <person name="Aturaliya R.N."/>
            <person name="Bailey T.L."/>
            <person name="Bansal M."/>
            <person name="Baxter L."/>
            <person name="Beisel K.W."/>
            <person name="Bersano T."/>
            <person name="Bono H."/>
            <person name="Chalk A.M."/>
            <person name="Chiu K.P."/>
            <person name="Choudhary V."/>
            <person name="Christoffels A."/>
            <person name="Clutterbuck D.R."/>
            <person name="Crowe M.L."/>
            <person name="Dalla E."/>
            <person name="Dalrymple B.P."/>
            <person name="de Bono B."/>
            <person name="Della Gatta G."/>
            <person name="di Bernardo D."/>
            <person name="Down T."/>
            <person name="Engstrom P."/>
            <person name="Fagiolini M."/>
            <person name="Faulkner G."/>
            <person name="Fletcher C.F."/>
            <person name="Fukushima T."/>
            <person name="Furuno M."/>
            <person name="Futaki S."/>
            <person name="Gariboldi M."/>
            <person name="Georgii-Hemming P."/>
            <person name="Gingeras T.R."/>
            <person name="Gojobori T."/>
            <person name="Green R.E."/>
            <person name="Gustincich S."/>
            <person name="Harbers M."/>
            <person name="Hayashi Y."/>
            <person name="Hensch T.K."/>
            <person name="Hirokawa N."/>
            <person name="Hill D."/>
            <person name="Huminiecki L."/>
            <person name="Iacono M."/>
            <person name="Ikeo K."/>
            <person name="Iwama A."/>
            <person name="Ishikawa T."/>
            <person name="Jakt M."/>
            <person name="Kanapin A."/>
            <person name="Katoh M."/>
            <person name="Kawasawa Y."/>
            <person name="Kelso J."/>
            <person name="Kitamura H."/>
            <person name="Kitano H."/>
            <person name="Kollias G."/>
            <person name="Krishnan S.P."/>
            <person name="Kruger A."/>
            <person name="Kummerfeld S.K."/>
            <person name="Kurochkin I.V."/>
            <person name="Lareau L.F."/>
            <person name="Lazarevic D."/>
            <person name="Lipovich L."/>
            <person name="Liu J."/>
            <person name="Liuni S."/>
            <person name="McWilliam S."/>
            <person name="Madan Babu M."/>
            <person name="Madera M."/>
            <person name="Marchionni L."/>
            <person name="Matsuda H."/>
            <person name="Matsuzawa S."/>
            <person name="Miki H."/>
            <person name="Mignone F."/>
            <person name="Miyake S."/>
            <person name="Morris K."/>
            <person name="Mottagui-Tabar S."/>
            <person name="Mulder N."/>
            <person name="Nakano N."/>
            <person name="Nakauchi H."/>
            <person name="Ng P."/>
            <person name="Nilsson R."/>
            <person name="Nishiguchi S."/>
            <person name="Nishikawa S."/>
            <person name="Nori F."/>
            <person name="Ohara O."/>
            <person name="Okazaki Y."/>
            <person name="Orlando V."/>
            <person name="Pang K.C."/>
            <person name="Pavan W.J."/>
            <person name="Pavesi G."/>
            <person name="Pesole G."/>
            <person name="Petrovsky N."/>
            <person name="Piazza S."/>
            <person name="Reed J."/>
            <person name="Reid J.F."/>
            <person name="Ring B.Z."/>
            <person name="Ringwald M."/>
            <person name="Rost B."/>
            <person name="Ruan Y."/>
            <person name="Salzberg S.L."/>
            <person name="Sandelin A."/>
            <person name="Schneider C."/>
            <person name="Schoenbach C."/>
            <person name="Sekiguchi K."/>
            <person name="Semple C.A."/>
            <person name="Seno S."/>
            <person name="Sessa L."/>
            <person name="Sheng Y."/>
            <person name="Shibata Y."/>
            <person name="Shimada H."/>
            <person name="Shimada K."/>
            <person name="Silva D."/>
            <person name="Sinclair B."/>
            <person name="Sperling S."/>
            <person name="Stupka E."/>
            <person name="Sugiura K."/>
            <person name="Sultana R."/>
            <person name="Takenaka Y."/>
            <person name="Taki K."/>
            <person name="Tammoja K."/>
            <person name="Tan S.L."/>
            <person name="Tang S."/>
            <person name="Taylor M.S."/>
            <person name="Tegner J."/>
            <person name="Teichmann S.A."/>
            <person name="Ueda H.R."/>
            <person name="van Nimwegen E."/>
            <person name="Verardo R."/>
            <person name="Wei C.L."/>
            <person name="Yagi K."/>
            <person name="Yamanishi H."/>
            <person name="Zabarovsky E."/>
            <person name="Zhu S."/>
            <person name="Zimmer A."/>
            <person name="Hide W."/>
            <person name="Bult C."/>
            <person name="Grimmond S.M."/>
            <person name="Teasdale R.D."/>
            <person name="Liu E.T."/>
            <person name="Brusic V."/>
            <person name="Quackenbush J."/>
            <person name="Wahlestedt C."/>
            <person name="Mattick J.S."/>
            <person name="Hume D.A."/>
            <person name="Kai C."/>
            <person name="Sasaki D."/>
            <person name="Tomaru Y."/>
            <person name="Fukuda S."/>
            <person name="Kanamori-Katayama M."/>
            <person name="Suzuki M."/>
            <person name="Aoki J."/>
            <person name="Arakawa T."/>
            <person name="Iida J."/>
            <person name="Imamura K."/>
            <person name="Itoh M."/>
            <person name="Kato T."/>
            <person name="Kawaji H."/>
            <person name="Kawagashira N."/>
            <person name="Kawashima T."/>
            <person name="Kojima M."/>
            <person name="Kondo S."/>
            <person name="Konno H."/>
            <person name="Nakano K."/>
            <person name="Ninomiya N."/>
            <person name="Nishio T."/>
            <person name="Okada M."/>
            <person name="Plessy C."/>
            <person name="Shibata K."/>
            <person name="Shiraki T."/>
            <person name="Suzuki S."/>
            <person name="Tagami M."/>
            <person name="Waki K."/>
            <person name="Watahiki A."/>
            <person name="Okamura-Oho Y."/>
            <person name="Suzuki H."/>
            <person name="Kawai J."/>
            <person name="Hayashizaki Y."/>
        </authorList>
    </citation>
    <scope>NUCLEOTIDE SEQUENCE [LARGE SCALE MRNA]</scope>
    <source>
        <strain>C57BL/6J</strain>
        <strain>DBA/2J</strain>
        <tissue>Bone marrow</tissue>
        <tissue>Heart</tissue>
        <tissue>Kidney</tissue>
        <tissue>Liver</tissue>
        <tissue>Pancreas</tissue>
    </source>
</reference>
<reference key="3">
    <citation type="journal article" date="2004" name="Genome Res.">
        <title>The status, quality, and expansion of the NIH full-length cDNA project: the Mammalian Gene Collection (MGC).</title>
        <authorList>
            <consortium name="The MGC Project Team"/>
        </authorList>
    </citation>
    <scope>NUCLEOTIDE SEQUENCE [LARGE SCALE MRNA]</scope>
    <source>
        <tissue>Brain</tissue>
    </source>
</reference>
<reference key="4">
    <citation type="unpublished observations" date="2023-10">
        <authorList>
            <person name="Leibundgut M.A."/>
            <person name="Ban N."/>
        </authorList>
    </citation>
    <scope>REVISION OF SUBUNIT</scope>
    <scope>NOMENCLATURE</scope>
</reference>
<reference evidence="6 7" key="5">
    <citation type="journal article" date="2022" name="Nature">
        <title>A male germ-cell-specific ribosome controls male fertility.</title>
        <authorList>
            <person name="Li H."/>
            <person name="Huo Y."/>
            <person name="He X."/>
            <person name="Yao L."/>
            <person name="Zhang H."/>
            <person name="Cui Y."/>
            <person name="Xiao H."/>
            <person name="Xie W."/>
            <person name="Zhang D."/>
            <person name="Wang Y."/>
            <person name="Zhang S."/>
            <person name="Tu H."/>
            <person name="Cheng Y."/>
            <person name="Guo Y."/>
            <person name="Cao X."/>
            <person name="Zhu Y."/>
            <person name="Jiang T."/>
            <person name="Guo X."/>
            <person name="Qin Y."/>
            <person name="Sha J."/>
        </authorList>
    </citation>
    <scope>STRUCTURE BY ELECTRON MICROSCOPY (3.03 ANGSTROMS) OF RIBOSOME</scope>
    <scope>FUNCTION</scope>
    <scope>SUBUNIT</scope>
    <scope>SUBCELLULAR LOCATION</scope>
</reference>
<name>RS32_MOUSE</name>
<comment type="function">
    <text evidence="1 3 5">Component of the small ribosomal subunit (Probable) (Ref.4). The ribosome is a large ribonucleoprotein complex responsible for the synthesis of proteins in the cell (PubMed:36517592). Interacts with the beta subunit of protein kinase CKII and stimulates phosphorylation of DNA topoisomerase II alpha by CKII (By similarity).</text>
</comment>
<comment type="subunit">
    <text evidence="5">Component of the small ribosomal subunit.</text>
</comment>
<comment type="subcellular location">
    <subcellularLocation>
        <location evidence="3">Cytoplasm</location>
    </subcellularLocation>
</comment>
<comment type="miscellaneous">
    <text evidence="5">Initially thought to be part of the large ribosomal subunit. Crystal structures show eS32/eL41 to be a small ribosomal subunit forming a bridge at the interface of the 2 subunits.</text>
</comment>
<comment type="similarity">
    <text evidence="4">Belongs to the eukaryotic ribosomal protein eS32 family.</text>
</comment>
<keyword id="KW-0002">3D-structure</keyword>
<keyword id="KW-0963">Cytoplasm</keyword>
<keyword id="KW-1185">Reference proteome</keyword>
<keyword id="KW-0687">Ribonucleoprotein</keyword>
<keyword id="KW-0689">Ribosomal protein</keyword>
<evidence type="ECO:0000250" key="1">
    <source>
        <dbReference type="UniProtKB" id="P62945"/>
    </source>
</evidence>
<evidence type="ECO:0000256" key="2">
    <source>
        <dbReference type="SAM" id="MobiDB-lite"/>
    </source>
</evidence>
<evidence type="ECO:0000269" key="3">
    <source>
    </source>
</evidence>
<evidence type="ECO:0000305" key="4"/>
<evidence type="ECO:0000305" key="5">
    <source ref="4"/>
</evidence>
<evidence type="ECO:0007744" key="6">
    <source>
        <dbReference type="PDB" id="7CPU"/>
    </source>
</evidence>
<evidence type="ECO:0007744" key="7">
    <source>
        <dbReference type="PDB" id="7CPV"/>
    </source>
</evidence>
<protein>
    <recommendedName>
        <fullName evidence="5">Small ribosomal subunit protein eS32</fullName>
    </recommendedName>
    <alternativeName>
        <fullName>60S ribosomal protein L41</fullName>
    </alternativeName>
    <alternativeName>
        <fullName evidence="4">Large ribosomal subunit protein eL41</fullName>
    </alternativeName>
</protein>
<feature type="chain" id="PRO_0000198056" description="Small ribosomal subunit protein eS32">
    <location>
        <begin position="1"/>
        <end position="25"/>
    </location>
</feature>
<feature type="region of interest" description="Disordered" evidence="2">
    <location>
        <begin position="1"/>
        <end position="25"/>
    </location>
</feature>
<dbReference type="EMBL" id="U93862">
    <property type="protein sequence ID" value="AAB52254.1"/>
    <property type="molecule type" value="mRNA"/>
</dbReference>
<dbReference type="EMBL" id="AK002503">
    <property type="protein sequence ID" value="BAC24994.1"/>
    <property type="molecule type" value="mRNA"/>
</dbReference>
<dbReference type="EMBL" id="AK007874">
    <property type="protein sequence ID" value="BAC25191.1"/>
    <property type="molecule type" value="mRNA"/>
</dbReference>
<dbReference type="EMBL" id="AK150502">
    <property type="protein sequence ID" value="BAE29615.1"/>
    <property type="molecule type" value="mRNA"/>
</dbReference>
<dbReference type="EMBL" id="AK151566">
    <property type="protein sequence ID" value="BAE30508.1"/>
    <property type="molecule type" value="mRNA"/>
</dbReference>
<dbReference type="EMBL" id="AK160588">
    <property type="protein sequence ID" value="BAE35895.1"/>
    <property type="molecule type" value="mRNA"/>
</dbReference>
<dbReference type="EMBL" id="AK168107">
    <property type="protein sequence ID" value="BAE40078.1"/>
    <property type="molecule type" value="mRNA"/>
</dbReference>
<dbReference type="EMBL" id="AK168485">
    <property type="protein sequence ID" value="BAE40372.1"/>
    <property type="molecule type" value="mRNA"/>
</dbReference>
<dbReference type="EMBL" id="AK168653">
    <property type="protein sequence ID" value="BAE40510.1"/>
    <property type="molecule type" value="mRNA"/>
</dbReference>
<dbReference type="EMBL" id="AK168719">
    <property type="protein sequence ID" value="BAE40561.1"/>
    <property type="molecule type" value="mRNA"/>
</dbReference>
<dbReference type="EMBL" id="BC145727">
    <property type="protein sequence ID" value="AAI45728.1"/>
    <property type="molecule type" value="mRNA"/>
</dbReference>
<dbReference type="EMBL" id="BC145729">
    <property type="protein sequence ID" value="AAI45730.1"/>
    <property type="molecule type" value="mRNA"/>
</dbReference>
<dbReference type="CCDS" id="CCDS56753.1"/>
<dbReference type="RefSeq" id="NP_061348.1">
    <property type="nucleotide sequence ID" value="NM_018860.4"/>
</dbReference>
<dbReference type="PDB" id="6SWA">
    <property type="method" value="EM"/>
    <property type="resolution" value="3.10 A"/>
    <property type="chains" value="l=1-25"/>
</dbReference>
<dbReference type="PDB" id="7CPU">
    <property type="method" value="EM"/>
    <property type="resolution" value="2.82 A"/>
    <property type="chains" value="Ln=1-25"/>
</dbReference>
<dbReference type="PDB" id="7CPV">
    <property type="method" value="EM"/>
    <property type="resolution" value="3.03 A"/>
    <property type="chains" value="Ln=1-25"/>
</dbReference>
<dbReference type="PDB" id="7LS1">
    <property type="method" value="EM"/>
    <property type="resolution" value="3.30 A"/>
    <property type="chains" value="h2=1-25"/>
</dbReference>
<dbReference type="PDB" id="7LS2">
    <property type="method" value="EM"/>
    <property type="resolution" value="3.10 A"/>
    <property type="chains" value="h2=1-25"/>
</dbReference>
<dbReference type="PDBsum" id="6SWA"/>
<dbReference type="PDBsum" id="7CPU"/>
<dbReference type="PDBsum" id="7CPV"/>
<dbReference type="PDBsum" id="7LS1"/>
<dbReference type="PDBsum" id="7LS2"/>
<dbReference type="EMDB" id="EMD-10321"/>
<dbReference type="EMDB" id="EMD-23500"/>
<dbReference type="EMDB" id="EMD-23501"/>
<dbReference type="EMDB" id="EMD-30432"/>
<dbReference type="EMDB" id="EMD-30433"/>
<dbReference type="SMR" id="P62947"/>
<dbReference type="ComplexPortal" id="CPX-5262">
    <property type="entry name" value="60S cytosolic large ribosomal subunit"/>
</dbReference>
<dbReference type="ComplexPortal" id="CPX-7662">
    <property type="entry name" value="60S cytosolic large ribosomal subunit, testis-specific variant"/>
</dbReference>
<dbReference type="ComplexPortal" id="CPX-7663">
    <property type="entry name" value="60S cytosolic large ribosomal subunit, striated muscle variant"/>
</dbReference>
<dbReference type="FunCoup" id="P62947">
    <property type="interactions" value="148"/>
</dbReference>
<dbReference type="DNASU" id="67945"/>
<dbReference type="Ensembl" id="ENSMUST00000176010.8">
    <property type="protein sequence ID" value="ENSMUSP00000135533.2"/>
    <property type="gene ID" value="ENSMUSG00000093674.8"/>
</dbReference>
<dbReference type="Ensembl" id="ENSMUST00000176683.8">
    <property type="protein sequence ID" value="ENSMUSP00000135158.2"/>
    <property type="gene ID" value="ENSMUSG00000093674.8"/>
</dbReference>
<dbReference type="Ensembl" id="ENSMUST00000177163.8">
    <property type="protein sequence ID" value="ENSMUSP00000134737.2"/>
    <property type="gene ID" value="ENSMUSG00000093674.8"/>
</dbReference>
<dbReference type="GeneID" id="67945"/>
<dbReference type="KEGG" id="mmu:67945"/>
<dbReference type="UCSC" id="uc007hnk.2">
    <property type="organism name" value="mouse"/>
</dbReference>
<dbReference type="AGR" id="MGI:1915195"/>
<dbReference type="CTD" id="6171"/>
<dbReference type="MGI" id="MGI:1915195">
    <property type="gene designation" value="Rpl41"/>
</dbReference>
<dbReference type="VEuPathDB" id="HostDB:ENSMUSG00000093674"/>
<dbReference type="eggNOG" id="ENOG502TDY0">
    <property type="taxonomic scope" value="Eukaryota"/>
</dbReference>
<dbReference type="GeneTree" id="ENSGT00900000143379"/>
<dbReference type="HOGENOM" id="CLU_220499_1_0_1"/>
<dbReference type="InParanoid" id="P62947"/>
<dbReference type="BioGRID-ORCS" id="67945">
    <property type="hits" value="5 hits in 51 CRISPR screens"/>
</dbReference>
<dbReference type="ChiTaRS" id="Rpl41">
    <property type="organism name" value="mouse"/>
</dbReference>
<dbReference type="PRO" id="PR:P62947"/>
<dbReference type="Proteomes" id="UP000000589">
    <property type="component" value="Chromosome 10"/>
</dbReference>
<dbReference type="Bgee" id="ENSMUSG00000093674">
    <property type="expression patterns" value="Expressed in blastoderm cell in morula and 69 other cell types or tissues"/>
</dbReference>
<dbReference type="ExpressionAtlas" id="P62947">
    <property type="expression patterns" value="baseline and differential"/>
</dbReference>
<dbReference type="GO" id="GO:0005737">
    <property type="term" value="C:cytoplasm"/>
    <property type="evidence" value="ECO:0000314"/>
    <property type="project" value="ComplexPortal"/>
</dbReference>
<dbReference type="GO" id="GO:0005829">
    <property type="term" value="C:cytosol"/>
    <property type="evidence" value="ECO:0000304"/>
    <property type="project" value="Reactome"/>
</dbReference>
<dbReference type="GO" id="GO:0022625">
    <property type="term" value="C:cytosolic large ribosomal subunit"/>
    <property type="evidence" value="ECO:0000314"/>
    <property type="project" value="UniProtKB"/>
</dbReference>
<dbReference type="GO" id="GO:0003735">
    <property type="term" value="F:structural constituent of ribosome"/>
    <property type="evidence" value="ECO:0000314"/>
    <property type="project" value="UniProtKB"/>
</dbReference>
<dbReference type="GO" id="GO:0002181">
    <property type="term" value="P:cytoplasmic translation"/>
    <property type="evidence" value="ECO:0000303"/>
    <property type="project" value="ComplexPortal"/>
</dbReference>
<dbReference type="InterPro" id="IPR007836">
    <property type="entry name" value="Ribosomal_eS32"/>
</dbReference>
<dbReference type="Pfam" id="PF05162">
    <property type="entry name" value="Ribosomal_L41"/>
    <property type="match status" value="1"/>
</dbReference>
<proteinExistence type="evidence at protein level"/>
<organism>
    <name type="scientific">Mus musculus</name>
    <name type="common">Mouse</name>
    <dbReference type="NCBI Taxonomy" id="10090"/>
    <lineage>
        <taxon>Eukaryota</taxon>
        <taxon>Metazoa</taxon>
        <taxon>Chordata</taxon>
        <taxon>Craniata</taxon>
        <taxon>Vertebrata</taxon>
        <taxon>Euteleostomi</taxon>
        <taxon>Mammalia</taxon>
        <taxon>Eutheria</taxon>
        <taxon>Euarchontoglires</taxon>
        <taxon>Glires</taxon>
        <taxon>Rodentia</taxon>
        <taxon>Myomorpha</taxon>
        <taxon>Muroidea</taxon>
        <taxon>Muridae</taxon>
        <taxon>Murinae</taxon>
        <taxon>Mus</taxon>
        <taxon>Mus</taxon>
    </lineage>
</organism>
<accession>P62947</accession>
<accession>A6H625</accession>
<accession>P28751</accession>
<accession>Q3UCJ7</accession>
<gene>
    <name type="primary">Rpl41</name>
</gene>